<organism>
    <name type="scientific">Afipia carboxidovorans (strain ATCC 49405 / DSM 1227 / KCTC 32145 / OM5)</name>
    <name type="common">Oligotropha carboxidovorans</name>
    <dbReference type="NCBI Taxonomy" id="504832"/>
    <lineage>
        <taxon>Bacteria</taxon>
        <taxon>Pseudomonadati</taxon>
        <taxon>Pseudomonadota</taxon>
        <taxon>Alphaproteobacteria</taxon>
        <taxon>Hyphomicrobiales</taxon>
        <taxon>Nitrobacteraceae</taxon>
        <taxon>Afipia</taxon>
    </lineage>
</organism>
<accession>B6JCC3</accession>
<accession>F8BVP1</accession>
<sequence>MLNSLDLEGPPSSTRVVVAMSGGVDSSTTAALLKAEGYDVIGITLQLYDHGEATHRKGACCAGQDIHDARDVAERIGIPHYVLDYESRFRESVIDRFAESYALGETPVPCIECNRSVKFRDLLTTAQELGAQALATGHYVASRRQPDGSRAMVCAADADRDQSYFLFATTQDQLNHLRFPLGDMTKAQTRELARRFDLPVAEKHDSQDICFVPTGRYTDVIERMRPNAMLPGDIVDLRGRVLGHHQGIANFTVGQRRGIGIAASMPLYVVALDAASRQVIVGPRAALRKNLITLRDINWIGDGTFDDVAREGRDLYIKVRSTRPPQPAHLRMNGDHCEVELFAGEEGVSPGQACVFYDAPTGQARVLGGGFITHASNNSDRAGTHHLALRAAI</sequence>
<feature type="chain" id="PRO_1000096299" description="tRNA-specific 2-thiouridylase MnmA">
    <location>
        <begin position="1"/>
        <end position="393"/>
    </location>
</feature>
<feature type="region of interest" description="Interaction with tRNA" evidence="1">
    <location>
        <begin position="160"/>
        <end position="162"/>
    </location>
</feature>
<feature type="active site" description="Nucleophile" evidence="1">
    <location>
        <position position="113"/>
    </location>
</feature>
<feature type="active site" description="Cysteine persulfide intermediate" evidence="1">
    <location>
        <position position="210"/>
    </location>
</feature>
<feature type="binding site" evidence="1">
    <location>
        <begin position="19"/>
        <end position="26"/>
    </location>
    <ligand>
        <name>ATP</name>
        <dbReference type="ChEBI" id="CHEBI:30616"/>
    </ligand>
</feature>
<feature type="binding site" evidence="1">
    <location>
        <position position="45"/>
    </location>
    <ligand>
        <name>ATP</name>
        <dbReference type="ChEBI" id="CHEBI:30616"/>
    </ligand>
</feature>
<feature type="binding site" evidence="1">
    <location>
        <position position="137"/>
    </location>
    <ligand>
        <name>ATP</name>
        <dbReference type="ChEBI" id="CHEBI:30616"/>
    </ligand>
</feature>
<feature type="site" description="Interaction with tRNA" evidence="1">
    <location>
        <position position="138"/>
    </location>
</feature>
<feature type="site" description="Interaction with tRNA" evidence="1">
    <location>
        <position position="352"/>
    </location>
</feature>
<feature type="disulfide bond" description="Alternate" evidence="1">
    <location>
        <begin position="113"/>
        <end position="210"/>
    </location>
</feature>
<comment type="function">
    <text evidence="1">Catalyzes the 2-thiolation of uridine at the wobble position (U34) of tRNA, leading to the formation of s(2)U34.</text>
</comment>
<comment type="catalytic activity">
    <reaction evidence="1">
        <text>S-sulfanyl-L-cysteinyl-[protein] + uridine(34) in tRNA + AH2 + ATP = 2-thiouridine(34) in tRNA + L-cysteinyl-[protein] + A + AMP + diphosphate + H(+)</text>
        <dbReference type="Rhea" id="RHEA:47032"/>
        <dbReference type="Rhea" id="RHEA-COMP:10131"/>
        <dbReference type="Rhea" id="RHEA-COMP:11726"/>
        <dbReference type="Rhea" id="RHEA-COMP:11727"/>
        <dbReference type="Rhea" id="RHEA-COMP:11728"/>
        <dbReference type="ChEBI" id="CHEBI:13193"/>
        <dbReference type="ChEBI" id="CHEBI:15378"/>
        <dbReference type="ChEBI" id="CHEBI:17499"/>
        <dbReference type="ChEBI" id="CHEBI:29950"/>
        <dbReference type="ChEBI" id="CHEBI:30616"/>
        <dbReference type="ChEBI" id="CHEBI:33019"/>
        <dbReference type="ChEBI" id="CHEBI:61963"/>
        <dbReference type="ChEBI" id="CHEBI:65315"/>
        <dbReference type="ChEBI" id="CHEBI:87170"/>
        <dbReference type="ChEBI" id="CHEBI:456215"/>
        <dbReference type="EC" id="2.8.1.13"/>
    </reaction>
</comment>
<comment type="subcellular location">
    <subcellularLocation>
        <location evidence="1">Cytoplasm</location>
    </subcellularLocation>
</comment>
<comment type="similarity">
    <text evidence="1">Belongs to the MnmA/TRMU family.</text>
</comment>
<name>MNMA_AFIC5</name>
<dbReference type="EC" id="2.8.1.13" evidence="1"/>
<dbReference type="EMBL" id="CP001196">
    <property type="protein sequence ID" value="ACI92339.1"/>
    <property type="molecule type" value="Genomic_DNA"/>
</dbReference>
<dbReference type="EMBL" id="CP002826">
    <property type="protein sequence ID" value="AEI07454.1"/>
    <property type="molecule type" value="Genomic_DNA"/>
</dbReference>
<dbReference type="RefSeq" id="WP_012562369.1">
    <property type="nucleotide sequence ID" value="NC_015684.1"/>
</dbReference>
<dbReference type="SMR" id="B6JCC3"/>
<dbReference type="STRING" id="504832.OCA5_c27600"/>
<dbReference type="KEGG" id="oca:OCAR_5207"/>
<dbReference type="KEGG" id="ocg:OCA5_c27600"/>
<dbReference type="PATRIC" id="fig|504832.7.peg.2917"/>
<dbReference type="eggNOG" id="COG0482">
    <property type="taxonomic scope" value="Bacteria"/>
</dbReference>
<dbReference type="HOGENOM" id="CLU_035188_0_1_5"/>
<dbReference type="OrthoDB" id="9800696at2"/>
<dbReference type="Proteomes" id="UP000007730">
    <property type="component" value="Chromosome"/>
</dbReference>
<dbReference type="GO" id="GO:0005737">
    <property type="term" value="C:cytoplasm"/>
    <property type="evidence" value="ECO:0007669"/>
    <property type="project" value="UniProtKB-SubCell"/>
</dbReference>
<dbReference type="GO" id="GO:0005524">
    <property type="term" value="F:ATP binding"/>
    <property type="evidence" value="ECO:0007669"/>
    <property type="project" value="UniProtKB-KW"/>
</dbReference>
<dbReference type="GO" id="GO:0000049">
    <property type="term" value="F:tRNA binding"/>
    <property type="evidence" value="ECO:0007669"/>
    <property type="project" value="UniProtKB-KW"/>
</dbReference>
<dbReference type="GO" id="GO:0103016">
    <property type="term" value="F:tRNA-uridine 2-sulfurtransferase activity"/>
    <property type="evidence" value="ECO:0007669"/>
    <property type="project" value="UniProtKB-EC"/>
</dbReference>
<dbReference type="GO" id="GO:0002143">
    <property type="term" value="P:tRNA wobble position uridine thiolation"/>
    <property type="evidence" value="ECO:0007669"/>
    <property type="project" value="TreeGrafter"/>
</dbReference>
<dbReference type="CDD" id="cd01998">
    <property type="entry name" value="MnmA_TRMU-like"/>
    <property type="match status" value="1"/>
</dbReference>
<dbReference type="FunFam" id="3.40.50.620:FF:000115">
    <property type="entry name" value="tRNA-specific 2-thiouridylase MnmA"/>
    <property type="match status" value="1"/>
</dbReference>
<dbReference type="Gene3D" id="2.30.30.280">
    <property type="entry name" value="Adenine nucleotide alpha hydrolases-like domains"/>
    <property type="match status" value="1"/>
</dbReference>
<dbReference type="Gene3D" id="3.40.50.620">
    <property type="entry name" value="HUPs"/>
    <property type="match status" value="1"/>
</dbReference>
<dbReference type="Gene3D" id="2.40.30.10">
    <property type="entry name" value="Translation factors"/>
    <property type="match status" value="1"/>
</dbReference>
<dbReference type="HAMAP" id="MF_00144">
    <property type="entry name" value="tRNA_thiouridyl_MnmA"/>
    <property type="match status" value="1"/>
</dbReference>
<dbReference type="InterPro" id="IPR004506">
    <property type="entry name" value="MnmA-like"/>
</dbReference>
<dbReference type="InterPro" id="IPR046885">
    <property type="entry name" value="MnmA-like_C"/>
</dbReference>
<dbReference type="InterPro" id="IPR046884">
    <property type="entry name" value="MnmA-like_central"/>
</dbReference>
<dbReference type="InterPro" id="IPR023382">
    <property type="entry name" value="MnmA-like_central_sf"/>
</dbReference>
<dbReference type="InterPro" id="IPR014729">
    <property type="entry name" value="Rossmann-like_a/b/a_fold"/>
</dbReference>
<dbReference type="NCBIfam" id="NF001138">
    <property type="entry name" value="PRK00143.1"/>
    <property type="match status" value="1"/>
</dbReference>
<dbReference type="NCBIfam" id="TIGR00420">
    <property type="entry name" value="trmU"/>
    <property type="match status" value="1"/>
</dbReference>
<dbReference type="PANTHER" id="PTHR11933:SF5">
    <property type="entry name" value="MITOCHONDRIAL TRNA-SPECIFIC 2-THIOURIDYLASE 1"/>
    <property type="match status" value="1"/>
</dbReference>
<dbReference type="PANTHER" id="PTHR11933">
    <property type="entry name" value="TRNA 5-METHYLAMINOMETHYL-2-THIOURIDYLATE -METHYLTRANSFERASE"/>
    <property type="match status" value="1"/>
</dbReference>
<dbReference type="Pfam" id="PF03054">
    <property type="entry name" value="tRNA_Me_trans"/>
    <property type="match status" value="1"/>
</dbReference>
<dbReference type="Pfam" id="PF20258">
    <property type="entry name" value="tRNA_Me_trans_C"/>
    <property type="match status" value="1"/>
</dbReference>
<dbReference type="Pfam" id="PF20259">
    <property type="entry name" value="tRNA_Me_trans_M"/>
    <property type="match status" value="1"/>
</dbReference>
<dbReference type="SUPFAM" id="SSF52402">
    <property type="entry name" value="Adenine nucleotide alpha hydrolases-like"/>
    <property type="match status" value="1"/>
</dbReference>
<proteinExistence type="inferred from homology"/>
<keyword id="KW-0067">ATP-binding</keyword>
<keyword id="KW-0963">Cytoplasm</keyword>
<keyword id="KW-1015">Disulfide bond</keyword>
<keyword id="KW-0547">Nucleotide-binding</keyword>
<keyword id="KW-1185">Reference proteome</keyword>
<keyword id="KW-0694">RNA-binding</keyword>
<keyword id="KW-0808">Transferase</keyword>
<keyword id="KW-0819">tRNA processing</keyword>
<keyword id="KW-0820">tRNA-binding</keyword>
<gene>
    <name evidence="1" type="primary">mnmA</name>
    <name type="ordered locus">OCAR_5207</name>
    <name type="ordered locus">OCA5_c27600</name>
</gene>
<protein>
    <recommendedName>
        <fullName evidence="1">tRNA-specific 2-thiouridylase MnmA</fullName>
        <ecNumber evidence="1">2.8.1.13</ecNumber>
    </recommendedName>
</protein>
<evidence type="ECO:0000255" key="1">
    <source>
        <dbReference type="HAMAP-Rule" id="MF_00144"/>
    </source>
</evidence>
<reference key="1">
    <citation type="journal article" date="2008" name="J. Bacteriol.">
        <title>Genome sequence of the chemolithoautotrophic bacterium Oligotropha carboxidovorans OM5T.</title>
        <authorList>
            <person name="Paul D."/>
            <person name="Bridges S."/>
            <person name="Burgess S.C."/>
            <person name="Dandass Y."/>
            <person name="Lawrence M.L."/>
        </authorList>
    </citation>
    <scope>NUCLEOTIDE SEQUENCE [LARGE SCALE GENOMIC DNA]</scope>
    <source>
        <strain>ATCC 49405 / DSM 1227 / KCTC 32145 / OM5</strain>
    </source>
</reference>
<reference key="2">
    <citation type="journal article" date="2011" name="J. Bacteriol.">
        <title>Complete genome sequences of the chemolithoautotrophic Oligotropha carboxidovorans strains OM4 and OM5.</title>
        <authorList>
            <person name="Volland S."/>
            <person name="Rachinger M."/>
            <person name="Strittmatter A."/>
            <person name="Daniel R."/>
            <person name="Gottschalk G."/>
            <person name="Meyer O."/>
        </authorList>
    </citation>
    <scope>NUCLEOTIDE SEQUENCE [LARGE SCALE GENOMIC DNA]</scope>
    <source>
        <strain>ATCC 49405 / DSM 1227 / KCTC 32145 / OM5</strain>
    </source>
</reference>